<evidence type="ECO:0000250" key="1"/>
<evidence type="ECO:0000305" key="2"/>
<protein>
    <recommendedName>
        <fullName>Tryptophan synthase beta chain</fullName>
        <ecNumber>4.2.1.20</ecNumber>
    </recommendedName>
</protein>
<name>TRPB_BUCAI</name>
<sequence length="388" mass="43084">MTLLNPYFGEFGGMYVPQILMPALFELEKNFVSAQKDAEFQKKFFYLLQNYAGRPTPLTLCKNLTKGTKTKIYLKREDLLHGGAHKTNQVLGQAMLAIRMKKKEIIAETGAGQHGVASAIACALFNLKCRIYMGIKDIKRQNTNVFRMKLMGAEVISVKNGSGTLKDACNEALRDWSSSYKKSHYMIGTAAGPHPYPTIVREFQKMIGEETKKQILEKENKLPDSIIACIGGGSNAIGIFSDFINDKVNLIGVEPAGYGIHTGKHGAPLKHGRTGIYFGMKSHLMQNKQGQIQESWSISAGLDFPSVGPEHAWLNSINRAKYVSITDEEAISAFQVLSRKEGIIPALESSHALAYALKLMKKDPTIEQILIANLSVVEIKIFLQYMMF</sequence>
<gene>
    <name type="primary">trpB</name>
    <name type="ordered locus">BU278</name>
</gene>
<accession>Q44685</accession>
<feature type="chain" id="PRO_0000098926" description="Tryptophan synthase beta chain">
    <location>
        <begin position="1"/>
        <end position="388"/>
    </location>
</feature>
<feature type="modified residue" description="N6-(pyridoxal phosphate)lysine" evidence="1">
    <location>
        <position position="86"/>
    </location>
</feature>
<feature type="sequence conflict" description="In Ref. 2; AAC41536." evidence="2" ref="2">
    <original>K</original>
    <variation>T</variation>
    <location>
        <position position="221"/>
    </location>
</feature>
<comment type="function">
    <text evidence="1">The beta subunit is responsible for the synthesis of L-tryptophan from indole and L-serine.</text>
</comment>
<comment type="catalytic activity">
    <reaction>
        <text>(1S,2R)-1-C-(indol-3-yl)glycerol 3-phosphate + L-serine = D-glyceraldehyde 3-phosphate + L-tryptophan + H2O</text>
        <dbReference type="Rhea" id="RHEA:10532"/>
        <dbReference type="ChEBI" id="CHEBI:15377"/>
        <dbReference type="ChEBI" id="CHEBI:33384"/>
        <dbReference type="ChEBI" id="CHEBI:57912"/>
        <dbReference type="ChEBI" id="CHEBI:58866"/>
        <dbReference type="ChEBI" id="CHEBI:59776"/>
        <dbReference type="EC" id="4.2.1.20"/>
    </reaction>
</comment>
<comment type="cofactor">
    <cofactor evidence="1">
        <name>pyridoxal 5'-phosphate</name>
        <dbReference type="ChEBI" id="CHEBI:597326"/>
    </cofactor>
</comment>
<comment type="pathway">
    <text>Amino-acid biosynthesis; L-tryptophan biosynthesis; L-tryptophan from chorismate: step 5/5.</text>
</comment>
<comment type="subunit">
    <text evidence="1">Tetramer of two alpha and two beta chains.</text>
</comment>
<comment type="similarity">
    <text evidence="2">Belongs to the TrpB family.</text>
</comment>
<organism>
    <name type="scientific">Buchnera aphidicola subsp. Acyrthosiphon pisum (strain APS)</name>
    <name type="common">Acyrthosiphon pisum symbiotic bacterium</name>
    <dbReference type="NCBI Taxonomy" id="107806"/>
    <lineage>
        <taxon>Bacteria</taxon>
        <taxon>Pseudomonadati</taxon>
        <taxon>Pseudomonadota</taxon>
        <taxon>Gammaproteobacteria</taxon>
        <taxon>Enterobacterales</taxon>
        <taxon>Erwiniaceae</taxon>
        <taxon>Buchnera</taxon>
    </lineage>
</organism>
<proteinExistence type="inferred from homology"/>
<keyword id="KW-0028">Amino-acid biosynthesis</keyword>
<keyword id="KW-0057">Aromatic amino acid biosynthesis</keyword>
<keyword id="KW-0456">Lyase</keyword>
<keyword id="KW-0663">Pyridoxal phosphate</keyword>
<keyword id="KW-1185">Reference proteome</keyword>
<keyword id="KW-0822">Tryptophan biosynthesis</keyword>
<reference key="1">
    <citation type="journal article" date="2000" name="Nature">
        <title>Genome sequence of the endocellular bacterial symbiont of aphids Buchnera sp. APS.</title>
        <authorList>
            <person name="Shigenobu S."/>
            <person name="Watanabe H."/>
            <person name="Hattori M."/>
            <person name="Sakaki Y."/>
            <person name="Ishikawa H."/>
        </authorList>
    </citation>
    <scope>NUCLEOTIDE SEQUENCE [LARGE SCALE GENOMIC DNA]</scope>
    <source>
        <strain>APS</strain>
    </source>
</reference>
<reference key="2">
    <citation type="journal article" date="1996" name="J. Mol. Evol.">
        <title>The tryptophan biosynthetic pathway of aphid endosymbionts (Buchnera): genetics and evolution of plasmid-associated anthranilate synthase (trpEG) within the aphididae.</title>
        <authorList>
            <person name="Rouhbakhsh D."/>
            <person name="Lai C.-Y."/>
            <person name="von Dohlen C.D."/>
            <person name="Clark M.A."/>
            <person name="Baumann L."/>
            <person name="Baumann P."/>
            <person name="Moran N.A."/>
            <person name="Voegtlin D.J."/>
        </authorList>
    </citation>
    <scope>NUCLEOTIDE SEQUENCE [GENOMIC DNA] OF 116-340</scope>
</reference>
<dbReference type="EC" id="4.2.1.20"/>
<dbReference type="EMBL" id="BA000003">
    <property type="protein sequence ID" value="BAB12988.1"/>
    <property type="molecule type" value="Genomic_DNA"/>
</dbReference>
<dbReference type="EMBL" id="L46355">
    <property type="protein sequence ID" value="AAC41536.1"/>
    <property type="molecule type" value="Genomic_DNA"/>
</dbReference>
<dbReference type="RefSeq" id="NP_240102.1">
    <property type="nucleotide sequence ID" value="NC_002528.1"/>
</dbReference>
<dbReference type="SMR" id="Q44685"/>
<dbReference type="EnsemblBacteria" id="BAB12988">
    <property type="protein sequence ID" value="BAB12988"/>
    <property type="gene ID" value="BAB12988"/>
</dbReference>
<dbReference type="KEGG" id="buc:BU278"/>
<dbReference type="PATRIC" id="fig|107806.10.peg.288"/>
<dbReference type="eggNOG" id="COG0133">
    <property type="taxonomic scope" value="Bacteria"/>
</dbReference>
<dbReference type="HOGENOM" id="CLU_016734_3_1_6"/>
<dbReference type="UniPathway" id="UPA00035">
    <property type="reaction ID" value="UER00044"/>
</dbReference>
<dbReference type="Proteomes" id="UP000001806">
    <property type="component" value="Chromosome"/>
</dbReference>
<dbReference type="GO" id="GO:0005737">
    <property type="term" value="C:cytoplasm"/>
    <property type="evidence" value="ECO:0007669"/>
    <property type="project" value="TreeGrafter"/>
</dbReference>
<dbReference type="GO" id="GO:0004834">
    <property type="term" value="F:tryptophan synthase activity"/>
    <property type="evidence" value="ECO:0007669"/>
    <property type="project" value="UniProtKB-UniRule"/>
</dbReference>
<dbReference type="CDD" id="cd06446">
    <property type="entry name" value="Trp-synth_B"/>
    <property type="match status" value="1"/>
</dbReference>
<dbReference type="FunFam" id="3.40.50.1100:FF:000001">
    <property type="entry name" value="Tryptophan synthase beta chain"/>
    <property type="match status" value="1"/>
</dbReference>
<dbReference type="FunFam" id="3.40.50.1100:FF:000004">
    <property type="entry name" value="Tryptophan synthase beta chain"/>
    <property type="match status" value="1"/>
</dbReference>
<dbReference type="Gene3D" id="3.40.50.1100">
    <property type="match status" value="2"/>
</dbReference>
<dbReference type="HAMAP" id="MF_00133">
    <property type="entry name" value="Trp_synth_beta"/>
    <property type="match status" value="1"/>
</dbReference>
<dbReference type="InterPro" id="IPR006653">
    <property type="entry name" value="Trp_synth_b_CS"/>
</dbReference>
<dbReference type="InterPro" id="IPR006654">
    <property type="entry name" value="Trp_synth_beta"/>
</dbReference>
<dbReference type="InterPro" id="IPR023026">
    <property type="entry name" value="Trp_synth_beta/beta-like"/>
</dbReference>
<dbReference type="InterPro" id="IPR001926">
    <property type="entry name" value="TrpB-like_PALP"/>
</dbReference>
<dbReference type="InterPro" id="IPR036052">
    <property type="entry name" value="TrpB-like_PALP_sf"/>
</dbReference>
<dbReference type="NCBIfam" id="TIGR00263">
    <property type="entry name" value="trpB"/>
    <property type="match status" value="1"/>
</dbReference>
<dbReference type="PANTHER" id="PTHR48077:SF3">
    <property type="entry name" value="TRYPTOPHAN SYNTHASE"/>
    <property type="match status" value="1"/>
</dbReference>
<dbReference type="PANTHER" id="PTHR48077">
    <property type="entry name" value="TRYPTOPHAN SYNTHASE-RELATED"/>
    <property type="match status" value="1"/>
</dbReference>
<dbReference type="Pfam" id="PF00291">
    <property type="entry name" value="PALP"/>
    <property type="match status" value="1"/>
</dbReference>
<dbReference type="PIRSF" id="PIRSF001413">
    <property type="entry name" value="Trp_syn_beta"/>
    <property type="match status" value="1"/>
</dbReference>
<dbReference type="SUPFAM" id="SSF53686">
    <property type="entry name" value="Tryptophan synthase beta subunit-like PLP-dependent enzymes"/>
    <property type="match status" value="1"/>
</dbReference>
<dbReference type="PROSITE" id="PS00168">
    <property type="entry name" value="TRP_SYNTHASE_BETA"/>
    <property type="match status" value="1"/>
</dbReference>